<proteinExistence type="inferred from homology"/>
<reference key="1">
    <citation type="journal article" date="2000" name="Biochim. Biophys. Acta">
        <title>Identification of the copper chaperone SAH in Ovis aries: expression analysis and in vitro interaction of SAH with ATP7B.</title>
        <authorList>
            <person name="Lockhart P.J."/>
            <person name="Mercer J.F.B."/>
        </authorList>
    </citation>
    <scope>NUCLEOTIDE SEQUENCE [MRNA]</scope>
</reference>
<gene>
    <name evidence="2" type="primary">ATOX1</name>
</gene>
<comment type="function">
    <text evidence="1">Binds and deliver cytosolic copper to the copper ATPase proteins. May be important in cellular antioxidant defense (By similarity).</text>
</comment>
<comment type="subunit">
    <text evidence="2">Homodimer. Interacts with ATP7B. Interacts with ATP7A. Interacts (via dimer form) with SLC31A1 (via C-terminal domain); this interaction improves ATOX1 stability and controls intracellular Cu(I) levels.</text>
</comment>
<comment type="domain">
    <text evidence="2">The heavy-metal-associated domain (HMA) coordinates a Cu(+) ion via the cysteine residues within the CXXC motif. The transfer of Cu(+) ion from ATOX1 to ATP7A involves the formation of a three-coordinate Cu(+)-bridged heterodimer where the metal is shared between the two metal binding sites of ATOX1 and ATP7A. The Cu(+) ion appears to switch between two coordination modes, forming two links with one protein and one with the other. Cisplatin, a chemotherapeutic drug, can bind the CXXC motif and hinder the release of Cu(+) ion.</text>
</comment>
<comment type="similarity">
    <text evidence="5">Belongs to the ATX1 family.</text>
</comment>
<keyword id="KW-0007">Acetylation</keyword>
<keyword id="KW-0143">Chaperone</keyword>
<keyword id="KW-0186">Copper</keyword>
<keyword id="KW-0187">Copper transport</keyword>
<keyword id="KW-0406">Ion transport</keyword>
<keyword id="KW-0479">Metal-binding</keyword>
<keyword id="KW-0597">Phosphoprotein</keyword>
<keyword id="KW-1185">Reference proteome</keyword>
<keyword id="KW-0813">Transport</keyword>
<name>ATOX1_SHEEP</name>
<evidence type="ECO:0000250" key="1"/>
<evidence type="ECO:0000250" key="2">
    <source>
        <dbReference type="UniProtKB" id="O00244"/>
    </source>
</evidence>
<evidence type="ECO:0000250" key="3">
    <source>
        <dbReference type="UniProtKB" id="O08997"/>
    </source>
</evidence>
<evidence type="ECO:0000255" key="4">
    <source>
        <dbReference type="PROSITE-ProRule" id="PRU00280"/>
    </source>
</evidence>
<evidence type="ECO:0000305" key="5"/>
<organism>
    <name type="scientific">Ovis aries</name>
    <name type="common">Sheep</name>
    <dbReference type="NCBI Taxonomy" id="9940"/>
    <lineage>
        <taxon>Eukaryota</taxon>
        <taxon>Metazoa</taxon>
        <taxon>Chordata</taxon>
        <taxon>Craniata</taxon>
        <taxon>Vertebrata</taxon>
        <taxon>Euteleostomi</taxon>
        <taxon>Mammalia</taxon>
        <taxon>Eutheria</taxon>
        <taxon>Laurasiatheria</taxon>
        <taxon>Artiodactyla</taxon>
        <taxon>Ruminantia</taxon>
        <taxon>Pecora</taxon>
        <taxon>Bovidae</taxon>
        <taxon>Caprinae</taxon>
        <taxon>Ovis</taxon>
    </lineage>
</organism>
<dbReference type="EMBL" id="AF134813">
    <property type="protein sequence ID" value="AAD38514.1"/>
    <property type="molecule type" value="mRNA"/>
</dbReference>
<dbReference type="RefSeq" id="NP_001009429.1">
    <property type="nucleotide sequence ID" value="NM_001009429.1"/>
</dbReference>
<dbReference type="RefSeq" id="XP_027824998.1">
    <property type="nucleotide sequence ID" value="XM_027969197.3"/>
</dbReference>
<dbReference type="RefSeq" id="XP_042105338.1">
    <property type="nucleotide sequence ID" value="XM_042249404.2"/>
</dbReference>
<dbReference type="SMR" id="Q9XT28"/>
<dbReference type="STRING" id="9940.ENSOARP00000009704"/>
<dbReference type="PaxDb" id="9940-ENSOARP00000009704"/>
<dbReference type="GeneID" id="443451"/>
<dbReference type="KEGG" id="oas:443451"/>
<dbReference type="CTD" id="475"/>
<dbReference type="eggNOG" id="KOG1603">
    <property type="taxonomic scope" value="Eukaryota"/>
</dbReference>
<dbReference type="OrthoDB" id="689350at2759"/>
<dbReference type="Proteomes" id="UP000002356">
    <property type="component" value="Unplaced"/>
</dbReference>
<dbReference type="GO" id="GO:0005829">
    <property type="term" value="C:cytosol"/>
    <property type="evidence" value="ECO:0007669"/>
    <property type="project" value="TreeGrafter"/>
</dbReference>
<dbReference type="GO" id="GO:0016531">
    <property type="term" value="F:copper chaperone activity"/>
    <property type="evidence" value="ECO:0007669"/>
    <property type="project" value="TreeGrafter"/>
</dbReference>
<dbReference type="GO" id="GO:0046872">
    <property type="term" value="F:metal ion binding"/>
    <property type="evidence" value="ECO:0007669"/>
    <property type="project" value="UniProtKB-KW"/>
</dbReference>
<dbReference type="GO" id="GO:0006825">
    <property type="term" value="P:copper ion transport"/>
    <property type="evidence" value="ECO:0007669"/>
    <property type="project" value="UniProtKB-KW"/>
</dbReference>
<dbReference type="CDD" id="cd00371">
    <property type="entry name" value="HMA"/>
    <property type="match status" value="1"/>
</dbReference>
<dbReference type="FunFam" id="3.30.70.100:FF:000008">
    <property type="entry name" value="Copper transport protein ATOX1"/>
    <property type="match status" value="1"/>
</dbReference>
<dbReference type="Gene3D" id="3.30.70.100">
    <property type="match status" value="1"/>
</dbReference>
<dbReference type="InterPro" id="IPR051881">
    <property type="entry name" value="Copper_transport_ATOX1-like"/>
</dbReference>
<dbReference type="InterPro" id="IPR017969">
    <property type="entry name" value="Heavy-metal-associated_CS"/>
</dbReference>
<dbReference type="InterPro" id="IPR006121">
    <property type="entry name" value="HMA_dom"/>
</dbReference>
<dbReference type="InterPro" id="IPR036163">
    <property type="entry name" value="HMA_dom_sf"/>
</dbReference>
<dbReference type="PANTHER" id="PTHR46365">
    <property type="entry name" value="COPPER TRANSPORT PROTEIN ATOX1"/>
    <property type="match status" value="1"/>
</dbReference>
<dbReference type="PANTHER" id="PTHR46365:SF1">
    <property type="entry name" value="COPPER TRANSPORT PROTEIN ATOX1"/>
    <property type="match status" value="1"/>
</dbReference>
<dbReference type="Pfam" id="PF00403">
    <property type="entry name" value="HMA"/>
    <property type="match status" value="1"/>
</dbReference>
<dbReference type="SUPFAM" id="SSF55008">
    <property type="entry name" value="HMA, heavy metal-associated domain"/>
    <property type="match status" value="1"/>
</dbReference>
<dbReference type="PROSITE" id="PS01047">
    <property type="entry name" value="HMA_1"/>
    <property type="match status" value="1"/>
</dbReference>
<dbReference type="PROSITE" id="PS50846">
    <property type="entry name" value="HMA_2"/>
    <property type="match status" value="1"/>
</dbReference>
<protein>
    <recommendedName>
        <fullName evidence="2">Copper transport protein ATOX1</fullName>
    </recommendedName>
    <alternativeName>
        <fullName>Copper chaperone SAH</fullName>
    </alternativeName>
    <alternativeName>
        <fullName>Metal transport protein ATX1</fullName>
    </alternativeName>
</protein>
<sequence length="68" mass="7365">MPKHEFSVDMTCEGCSNAVTRVLNKLGGVQFDIDLPNKKVCINSEHSVDTLLETLGKTGKAVSYLGPK</sequence>
<feature type="chain" id="PRO_0000212540" description="Copper transport protein ATOX1">
    <location>
        <begin position="1"/>
        <end position="68"/>
    </location>
</feature>
<feature type="domain" description="HMA" evidence="4">
    <location>
        <begin position="1"/>
        <end position="63"/>
    </location>
</feature>
<feature type="binding site" evidence="2 4">
    <location>
        <position position="12"/>
    </location>
    <ligand>
        <name>Cu cation</name>
        <dbReference type="ChEBI" id="CHEBI:23378"/>
    </ligand>
</feature>
<feature type="binding site" evidence="2 4">
    <location>
        <position position="15"/>
    </location>
    <ligand>
        <name>Cu cation</name>
        <dbReference type="ChEBI" id="CHEBI:23378"/>
    </ligand>
</feature>
<feature type="modified residue" description="Phosphoserine" evidence="2">
    <location>
        <position position="47"/>
    </location>
</feature>
<feature type="modified residue" description="N6-acetyllysine" evidence="3">
    <location>
        <position position="60"/>
    </location>
</feature>
<accession>Q9XT28</accession>